<name>ARF3_RAT</name>
<comment type="function">
    <text>GTP-binding protein that functions as an allosteric activator of the cholera toxin catalytic subunit, an ADP-ribosyltransferase. Involved in protein trafficking; may modulate vesicle budding and uncoating within the Golgi apparatus.</text>
</comment>
<comment type="subunit">
    <text evidence="1">Interacts with PRKCABP. Interacts with PI4KB and NCS1/FREQ at the Golgi complex.</text>
</comment>
<comment type="subcellular location">
    <subcellularLocation>
        <location evidence="1">Golgi apparatus</location>
    </subcellularLocation>
    <subcellularLocation>
        <location evidence="1">Cytoplasm</location>
        <location evidence="1">Perinuclear region</location>
    </subcellularLocation>
</comment>
<comment type="similarity">
    <text evidence="3">Belongs to the small GTPase superfamily. Arf family.</text>
</comment>
<accession>P61206</accession>
<accession>P16587</accession>
<sequence length="181" mass="20601">MGNIFGNLLKSLIGKKEMRILMVGLDAAGKTTILYKLKLGEIVTTIPTIGFNVETVEYKNISFTVWDVGGQDKIRPLWRHYFQNTQGLIFVVDSNDRERVNEAREELMRMLAEDELRDAVLLVFANKQDLPNAMNAAEITDKLGLHSLRHRNWYIQATCATSGDGLYEGLDWLANQLKNKK</sequence>
<protein>
    <recommendedName>
        <fullName>ADP-ribosylation factor 3</fullName>
    </recommendedName>
    <alternativeName>
        <fullName>Liver regeneration-related protein LRRG202</fullName>
    </alternativeName>
</protein>
<organism>
    <name type="scientific">Rattus norvegicus</name>
    <name type="common">Rat</name>
    <dbReference type="NCBI Taxonomy" id="10116"/>
    <lineage>
        <taxon>Eukaryota</taxon>
        <taxon>Metazoa</taxon>
        <taxon>Chordata</taxon>
        <taxon>Craniata</taxon>
        <taxon>Vertebrata</taxon>
        <taxon>Euteleostomi</taxon>
        <taxon>Mammalia</taxon>
        <taxon>Eutheria</taxon>
        <taxon>Euarchontoglires</taxon>
        <taxon>Glires</taxon>
        <taxon>Rodentia</taxon>
        <taxon>Myomorpha</taxon>
        <taxon>Muroidea</taxon>
        <taxon>Muridae</taxon>
        <taxon>Murinae</taxon>
        <taxon>Rattus</taxon>
    </lineage>
</organism>
<evidence type="ECO:0000250" key="1"/>
<evidence type="ECO:0000255" key="2"/>
<evidence type="ECO:0000305" key="3"/>
<gene>
    <name type="primary">Arf3</name>
    <name type="ORF">Ac1-253</name>
</gene>
<keyword id="KW-0963">Cytoplasm</keyword>
<keyword id="KW-0931">ER-Golgi transport</keyword>
<keyword id="KW-0333">Golgi apparatus</keyword>
<keyword id="KW-0342">GTP-binding</keyword>
<keyword id="KW-0449">Lipoprotein</keyword>
<keyword id="KW-0519">Myristate</keyword>
<keyword id="KW-0547">Nucleotide-binding</keyword>
<keyword id="KW-0653">Protein transport</keyword>
<keyword id="KW-1185">Reference proteome</keyword>
<keyword id="KW-0813">Transport</keyword>
<feature type="initiator methionine" description="Removed" evidence="2">
    <location>
        <position position="1"/>
    </location>
</feature>
<feature type="chain" id="PRO_0000207389" description="ADP-ribosylation factor 3">
    <location>
        <begin position="2"/>
        <end position="181"/>
    </location>
</feature>
<feature type="binding site" evidence="1">
    <location>
        <begin position="24"/>
        <end position="31"/>
    </location>
    <ligand>
        <name>GTP</name>
        <dbReference type="ChEBI" id="CHEBI:37565"/>
    </ligand>
</feature>
<feature type="binding site" evidence="1">
    <location>
        <begin position="67"/>
        <end position="71"/>
    </location>
    <ligand>
        <name>GTP</name>
        <dbReference type="ChEBI" id="CHEBI:37565"/>
    </ligand>
</feature>
<feature type="binding site" evidence="1">
    <location>
        <begin position="126"/>
        <end position="129"/>
    </location>
    <ligand>
        <name>GTP</name>
        <dbReference type="ChEBI" id="CHEBI:37565"/>
    </ligand>
</feature>
<feature type="lipid moiety-binding region" description="N-myristoyl glycine" evidence="2">
    <location>
        <position position="2"/>
    </location>
</feature>
<reference key="1">
    <citation type="journal article" date="1996" name="Mol. Cell. Biochem.">
        <title>Interspecies relationships among ADP-ribosylation factors (ARFs): evidence of evolutionary pressure to maintain individual identities.</title>
        <authorList>
            <person name="Price S.R."/>
            <person name="Nightingale M.S."/>
            <person name="Tsuchiya M."/>
            <person name="Moss J."/>
            <person name="Vaughan M."/>
        </authorList>
    </citation>
    <scope>NUCLEOTIDE SEQUENCE [MRNA]</scope>
    <source>
        <tissue>Brain</tissue>
    </source>
</reference>
<reference key="2">
    <citation type="submission" date="2003-06" db="EMBL/GenBank/DDBJ databases">
        <title>Liver regeneration after PH.</title>
        <authorList>
            <person name="Xu C.S."/>
            <person name="Li W.Q."/>
            <person name="Li Y.C."/>
            <person name="Han H.P."/>
            <person name="Wang G.P."/>
            <person name="Chai L.Q."/>
            <person name="Yuan J.Y."/>
            <person name="Yang K.J."/>
            <person name="Yan H.M."/>
            <person name="Chang C.F."/>
            <person name="Zhao L.F."/>
            <person name="Ma H."/>
            <person name="Wang L."/>
            <person name="Wang S.F."/>
            <person name="Shi J.B."/>
            <person name="Rahman S."/>
            <person name="Wang Q.N."/>
            <person name="Zhang J.B."/>
        </authorList>
    </citation>
    <scope>NUCLEOTIDE SEQUENCE [LARGE SCALE MRNA]</scope>
    <source>
        <tissue>Liver</tissue>
    </source>
</reference>
<reference key="3">
    <citation type="journal article" date="2004" name="Genome Res.">
        <title>The status, quality, and expansion of the NIH full-length cDNA project: the Mammalian Gene Collection (MGC).</title>
        <authorList>
            <consortium name="The MGC Project Team"/>
        </authorList>
    </citation>
    <scope>NUCLEOTIDE SEQUENCE [LARGE SCALE MRNA]</scope>
    <source>
        <tissue>Brain</tissue>
    </source>
</reference>
<dbReference type="EMBL" id="L12382">
    <property type="protein sequence ID" value="AAA40687.1"/>
    <property type="molecule type" value="mRNA"/>
</dbReference>
<dbReference type="EMBL" id="AY325223">
    <property type="protein sequence ID" value="AAP92624.1"/>
    <property type="molecule type" value="mRNA"/>
</dbReference>
<dbReference type="EMBL" id="BC088865">
    <property type="protein sequence ID" value="AAH88865.1"/>
    <property type="molecule type" value="mRNA"/>
</dbReference>
<dbReference type="RefSeq" id="NP_543180.1">
    <property type="nucleotide sequence ID" value="NM_080904.3"/>
</dbReference>
<dbReference type="RefSeq" id="XP_006257382.1">
    <property type="nucleotide sequence ID" value="XM_006257320.3"/>
</dbReference>
<dbReference type="RefSeq" id="XP_017450124.1">
    <property type="nucleotide sequence ID" value="XM_017594635.3"/>
</dbReference>
<dbReference type="RefSeq" id="XP_017450125.1">
    <property type="nucleotide sequence ID" value="XM_017594636.3"/>
</dbReference>
<dbReference type="SMR" id="P61206"/>
<dbReference type="BioGRID" id="250874">
    <property type="interactions" value="3"/>
</dbReference>
<dbReference type="FunCoup" id="P61206">
    <property type="interactions" value="3223"/>
</dbReference>
<dbReference type="IntAct" id="P61206">
    <property type="interactions" value="3"/>
</dbReference>
<dbReference type="MINT" id="P61206"/>
<dbReference type="STRING" id="10116.ENSRNOP00000073132"/>
<dbReference type="GlyGen" id="P61206">
    <property type="glycosylation" value="1 site, 1 O-linked glycan (1 site)"/>
</dbReference>
<dbReference type="iPTMnet" id="P61206"/>
<dbReference type="PhosphoSitePlus" id="P61206"/>
<dbReference type="jPOST" id="P61206"/>
<dbReference type="PaxDb" id="10116-ENSRNOP00000047811"/>
<dbReference type="Ensembl" id="ENSRNOT00000077884.2">
    <property type="protein sequence ID" value="ENSRNOP00000069538.1"/>
    <property type="gene ID" value="ENSRNOG00000054775.2"/>
</dbReference>
<dbReference type="GeneID" id="140940"/>
<dbReference type="KEGG" id="rno:140940"/>
<dbReference type="UCSC" id="RGD:621273">
    <property type="organism name" value="rat"/>
</dbReference>
<dbReference type="AGR" id="RGD:621273"/>
<dbReference type="CTD" id="377"/>
<dbReference type="RGD" id="621273">
    <property type="gene designation" value="Arf3"/>
</dbReference>
<dbReference type="eggNOG" id="KOG0070">
    <property type="taxonomic scope" value="Eukaryota"/>
</dbReference>
<dbReference type="GeneTree" id="ENSGT00950000183080"/>
<dbReference type="HOGENOM" id="CLU_040729_9_3_1"/>
<dbReference type="InParanoid" id="P61206"/>
<dbReference type="OMA" id="IRQRHWF"/>
<dbReference type="OrthoDB" id="6539at9989"/>
<dbReference type="PhylomeDB" id="P61206"/>
<dbReference type="TreeFam" id="TF300808"/>
<dbReference type="Reactome" id="R-RNO-1660514">
    <property type="pathway name" value="Synthesis of PIPs at the Golgi membrane"/>
</dbReference>
<dbReference type="Reactome" id="R-RNO-6807878">
    <property type="pathway name" value="COPI-mediated anterograde transport"/>
</dbReference>
<dbReference type="Reactome" id="R-RNO-6811434">
    <property type="pathway name" value="COPI-dependent Golgi-to-ER retrograde traffic"/>
</dbReference>
<dbReference type="PRO" id="PR:P61206"/>
<dbReference type="Proteomes" id="UP000002494">
    <property type="component" value="Chromosome 7"/>
</dbReference>
<dbReference type="Bgee" id="ENSRNOG00000054775">
    <property type="expression patterns" value="Expressed in frontal cortex and 19 other cell types or tissues"/>
</dbReference>
<dbReference type="ExpressionAtlas" id="P61206">
    <property type="expression patterns" value="baseline and differential"/>
</dbReference>
<dbReference type="GO" id="GO:0005737">
    <property type="term" value="C:cytoplasm"/>
    <property type="evidence" value="ECO:0000318"/>
    <property type="project" value="GO_Central"/>
</dbReference>
<dbReference type="GO" id="GO:0005794">
    <property type="term" value="C:Golgi apparatus"/>
    <property type="evidence" value="ECO:0000266"/>
    <property type="project" value="RGD"/>
</dbReference>
<dbReference type="GO" id="GO:0048471">
    <property type="term" value="C:perinuclear region of cytoplasm"/>
    <property type="evidence" value="ECO:0007669"/>
    <property type="project" value="UniProtKB-SubCell"/>
</dbReference>
<dbReference type="GO" id="GO:0005886">
    <property type="term" value="C:plasma membrane"/>
    <property type="evidence" value="ECO:0000318"/>
    <property type="project" value="GO_Central"/>
</dbReference>
<dbReference type="GO" id="GO:0005525">
    <property type="term" value="F:GTP binding"/>
    <property type="evidence" value="ECO:0000318"/>
    <property type="project" value="GO_Central"/>
</dbReference>
<dbReference type="GO" id="GO:0003924">
    <property type="term" value="F:GTPase activity"/>
    <property type="evidence" value="ECO:0007669"/>
    <property type="project" value="InterPro"/>
</dbReference>
<dbReference type="GO" id="GO:0006886">
    <property type="term" value="P:intracellular protein transport"/>
    <property type="evidence" value="ECO:0000318"/>
    <property type="project" value="GO_Central"/>
</dbReference>
<dbReference type="GO" id="GO:0006890">
    <property type="term" value="P:retrograde vesicle-mediated transport, Golgi to endoplasmic reticulum"/>
    <property type="evidence" value="ECO:0000266"/>
    <property type="project" value="RGD"/>
</dbReference>
<dbReference type="GO" id="GO:0016192">
    <property type="term" value="P:vesicle-mediated transport"/>
    <property type="evidence" value="ECO:0000318"/>
    <property type="project" value="GO_Central"/>
</dbReference>
<dbReference type="CDD" id="cd04150">
    <property type="entry name" value="Arf1_5_like"/>
    <property type="match status" value="1"/>
</dbReference>
<dbReference type="FunFam" id="3.40.50.300:FF:003500">
    <property type="entry name" value="ADP-ribosylation factor 1"/>
    <property type="match status" value="1"/>
</dbReference>
<dbReference type="Gene3D" id="3.40.50.300">
    <property type="entry name" value="P-loop containing nucleotide triphosphate hydrolases"/>
    <property type="match status" value="1"/>
</dbReference>
<dbReference type="InterPro" id="IPR045872">
    <property type="entry name" value="Arf1-5-like"/>
</dbReference>
<dbReference type="InterPro" id="IPR027417">
    <property type="entry name" value="P-loop_NTPase"/>
</dbReference>
<dbReference type="InterPro" id="IPR005225">
    <property type="entry name" value="Small_GTP-bd"/>
</dbReference>
<dbReference type="InterPro" id="IPR024156">
    <property type="entry name" value="Small_GTPase_ARF"/>
</dbReference>
<dbReference type="InterPro" id="IPR006689">
    <property type="entry name" value="Small_GTPase_ARF/SAR"/>
</dbReference>
<dbReference type="NCBIfam" id="TIGR00231">
    <property type="entry name" value="small_GTP"/>
    <property type="match status" value="1"/>
</dbReference>
<dbReference type="PANTHER" id="PTHR11711">
    <property type="entry name" value="ADP RIBOSYLATION FACTOR-RELATED"/>
    <property type="match status" value="1"/>
</dbReference>
<dbReference type="Pfam" id="PF00025">
    <property type="entry name" value="Arf"/>
    <property type="match status" value="1"/>
</dbReference>
<dbReference type="PRINTS" id="PR00328">
    <property type="entry name" value="SAR1GTPBP"/>
</dbReference>
<dbReference type="SMART" id="SM00177">
    <property type="entry name" value="ARF"/>
    <property type="match status" value="1"/>
</dbReference>
<dbReference type="SMART" id="SM00175">
    <property type="entry name" value="RAB"/>
    <property type="match status" value="1"/>
</dbReference>
<dbReference type="SMART" id="SM00178">
    <property type="entry name" value="SAR"/>
    <property type="match status" value="1"/>
</dbReference>
<dbReference type="SUPFAM" id="SSF52540">
    <property type="entry name" value="P-loop containing nucleoside triphosphate hydrolases"/>
    <property type="match status" value="1"/>
</dbReference>
<dbReference type="PROSITE" id="PS51417">
    <property type="entry name" value="ARF"/>
    <property type="match status" value="1"/>
</dbReference>
<proteinExistence type="evidence at transcript level"/>